<proteinExistence type="uncertain"/>
<reference key="1">
    <citation type="journal article" date="2005" name="Nucleic Acids Res.">
        <title>Genome dynamics and diversity of Shigella species, the etiologic agents of bacillary dysentery.</title>
        <authorList>
            <person name="Yang F."/>
            <person name="Yang J."/>
            <person name="Zhang X."/>
            <person name="Chen L."/>
            <person name="Jiang Y."/>
            <person name="Yan Y."/>
            <person name="Tang X."/>
            <person name="Wang J."/>
            <person name="Xiong Z."/>
            <person name="Dong J."/>
            <person name="Xue Y."/>
            <person name="Zhu Y."/>
            <person name="Xu X."/>
            <person name="Sun L."/>
            <person name="Chen S."/>
            <person name="Nie H."/>
            <person name="Peng J."/>
            <person name="Xu J."/>
            <person name="Wang Y."/>
            <person name="Yuan Z."/>
            <person name="Wen Y."/>
            <person name="Yao Z."/>
            <person name="Shen Y."/>
            <person name="Qiang B."/>
            <person name="Hou Y."/>
            <person name="Yu J."/>
            <person name="Jin Q."/>
        </authorList>
    </citation>
    <scope>NUCLEOTIDE SEQUENCE [LARGE SCALE GENOMIC DNA]</scope>
    <source>
        <strain>Sd197</strain>
    </source>
</reference>
<feature type="chain" id="PRO_0000315009" description="Putative protein Ves">
    <location>
        <begin position="1"/>
        <end position="91"/>
    </location>
</feature>
<organism>
    <name type="scientific">Shigella dysenteriae serotype 1 (strain Sd197)</name>
    <dbReference type="NCBI Taxonomy" id="300267"/>
    <lineage>
        <taxon>Bacteria</taxon>
        <taxon>Pseudomonadati</taxon>
        <taxon>Pseudomonadota</taxon>
        <taxon>Gammaproteobacteria</taxon>
        <taxon>Enterobacterales</taxon>
        <taxon>Enterobacteriaceae</taxon>
        <taxon>Shigella</taxon>
    </lineage>
</organism>
<evidence type="ECO:0000305" key="1"/>
<keyword id="KW-1185">Reference proteome</keyword>
<sequence>MEYFDMRKMSVNLWRNAAGETREICTFPPAKRDFYWRASIVSIAANGEFSLFPGMERIVTLLEGGEMFLESTDRFNHTLVMLPISRTCVFQ</sequence>
<comment type="similarity">
    <text evidence="1">Belongs to the Ves family.</text>
</comment>
<comment type="caution">
    <text evidence="1">Could be the product of a pseudogene. This sequence is much shorter than orthologs.</text>
</comment>
<accession>Q32G84</accession>
<dbReference type="EMBL" id="CP000034">
    <property type="protein sequence ID" value="ABB61671.1"/>
    <property type="molecule type" value="Genomic_DNA"/>
</dbReference>
<dbReference type="RefSeq" id="YP_403162.1">
    <property type="nucleotide sequence ID" value="NC_007606.1"/>
</dbReference>
<dbReference type="SMR" id="Q32G84"/>
<dbReference type="STRING" id="300267.SDY_1535"/>
<dbReference type="EnsemblBacteria" id="ABB61671">
    <property type="protein sequence ID" value="ABB61671"/>
    <property type="gene ID" value="SDY_1535"/>
</dbReference>
<dbReference type="KEGG" id="sdy:SDY_1535"/>
<dbReference type="PATRIC" id="fig|300267.13.peg.1839"/>
<dbReference type="HOGENOM" id="CLU_090931_5_1_6"/>
<dbReference type="Proteomes" id="UP000002716">
    <property type="component" value="Chromosome"/>
</dbReference>
<dbReference type="Gene3D" id="2.60.120.10">
    <property type="entry name" value="Jelly Rolls"/>
    <property type="match status" value="1"/>
</dbReference>
<dbReference type="InterPro" id="IPR014710">
    <property type="entry name" value="RmlC-like_jellyroll"/>
</dbReference>
<dbReference type="InterPro" id="IPR011051">
    <property type="entry name" value="RmlC_Cupin_sf"/>
</dbReference>
<dbReference type="InterPro" id="IPR010282">
    <property type="entry name" value="Uncharacterised_HutD/Ves"/>
</dbReference>
<dbReference type="PANTHER" id="PTHR37943">
    <property type="entry name" value="PROTEIN VES"/>
    <property type="match status" value="1"/>
</dbReference>
<dbReference type="PANTHER" id="PTHR37943:SF1">
    <property type="entry name" value="PROTEIN VES"/>
    <property type="match status" value="1"/>
</dbReference>
<dbReference type="Pfam" id="PF05962">
    <property type="entry name" value="HutD"/>
    <property type="match status" value="1"/>
</dbReference>
<dbReference type="SUPFAM" id="SSF51182">
    <property type="entry name" value="RmlC-like cupins"/>
    <property type="match status" value="1"/>
</dbReference>
<name>VES_SHIDS</name>
<gene>
    <name type="primary">ves</name>
    <name type="ordered locus">SDY_1535</name>
</gene>
<protein>
    <recommendedName>
        <fullName>Putative protein Ves</fullName>
    </recommendedName>
</protein>